<keyword id="KW-0067">ATP-binding</keyword>
<keyword id="KW-0235">DNA replication</keyword>
<keyword id="KW-0238">DNA-binding</keyword>
<keyword id="KW-0347">Helicase</keyword>
<keyword id="KW-0378">Hydrolase</keyword>
<keyword id="KW-0413">Isomerase</keyword>
<keyword id="KW-0479">Metal-binding</keyword>
<keyword id="KW-0547">Nucleotide-binding</keyword>
<keyword id="KW-0639">Primosome</keyword>
<keyword id="KW-1185">Reference proteome</keyword>
<keyword id="KW-0862">Zinc</keyword>
<evidence type="ECO:0000255" key="1">
    <source>
        <dbReference type="HAMAP-Rule" id="MF_00983"/>
    </source>
</evidence>
<comment type="function">
    <text evidence="1">Initiates the restart of stalled replication forks, which reloads the replicative helicase on sites other than the origin of replication. Recognizes and binds to abandoned replication forks and remodels them to uncover a helicase loading site. Promotes assembly of the primosome at these replication forks.</text>
</comment>
<comment type="catalytic activity">
    <reaction evidence="1">
        <text>Couples ATP hydrolysis with the unwinding of duplex DNA by translocating in the 3'-5' direction.</text>
        <dbReference type="EC" id="5.6.2.4"/>
    </reaction>
</comment>
<comment type="catalytic activity">
    <reaction evidence="1">
        <text>ATP + H2O = ADP + phosphate + H(+)</text>
        <dbReference type="Rhea" id="RHEA:13065"/>
        <dbReference type="ChEBI" id="CHEBI:15377"/>
        <dbReference type="ChEBI" id="CHEBI:15378"/>
        <dbReference type="ChEBI" id="CHEBI:30616"/>
        <dbReference type="ChEBI" id="CHEBI:43474"/>
        <dbReference type="ChEBI" id="CHEBI:456216"/>
        <dbReference type="EC" id="5.6.2.4"/>
    </reaction>
</comment>
<comment type="cofactor">
    <cofactor evidence="1">
        <name>Zn(2+)</name>
        <dbReference type="ChEBI" id="CHEBI:29105"/>
    </cofactor>
    <text evidence="1">Binds 2 zinc ions per subunit.</text>
</comment>
<comment type="subunit">
    <text evidence="1">Component of the replication restart primosome.</text>
</comment>
<comment type="similarity">
    <text evidence="1">Belongs to the helicase family. PriA subfamily.</text>
</comment>
<proteinExistence type="inferred from homology"/>
<name>PRIA_HAEIN</name>
<sequence>MKIVRVALAVPLPRLFDYFVPDDVSLQIGMRVLVPFGTQKRVAIVADFPTKSDVPEDKLKAILQPLDLAPLFTPIYWDWLHWAANYYQAGLGDVLFQALPVKLRNGESAVKNDRTFWRITDAGKNALKQGELKRSKKQAEALQYLSETDLEKGNNDFSSAIWSALKAKGFIEEITIQTNPLSWQQRLGNNPIVNAENRLTLNKQQALAFSQLLFHSGFNVWLLDGVTGSGKTEIYLQYIEEILKSGKQVLVLVPEIGLTPQTVQRFKVRFNVEIDVLHSNLTDTQRLYVWDRARSGQSAIVIGTRSALFTQFSNLGAIILDEEHDSSYKQQDSWRYHARDLAIVLAQKLNISVLMGSATPSLESINNVQNGKYQHLVLSKRAGNSTALRHFVIDLKNQNIQNGLSKPLLERMKAHLEKGNQVLLFLNRRGFAPVLLCHECGWIAQCPHCEKPYTYHQHQNVLRCHHCGAQKTIPRQCGDCGSTHLVTTGLGTEQLEETLKTLFPHYSVARIDRDSTSRKGKLEGYLEDIQQGKSQILIGTQMLAKGHHFPNVTLVALVNVDSALFSLDFRAEERLAQLYIQVAGRAGRADKQGEVVLQTHYPDHPLLTTLLANGYQAFAKETLQLRHSMGLPPFTFQALIKAQARHSDLAENCLSQIADFFQSKQITGLQMLGPMPAPFSKKAGQYRWQLLLQHPSRMTLQKALREYQQAELEKNSQVRLILDVDPQDLS</sequence>
<reference key="1">
    <citation type="journal article" date="1995" name="Science">
        <title>Whole-genome random sequencing and assembly of Haemophilus influenzae Rd.</title>
        <authorList>
            <person name="Fleischmann R.D."/>
            <person name="Adams M.D."/>
            <person name="White O."/>
            <person name="Clayton R.A."/>
            <person name="Kirkness E.F."/>
            <person name="Kerlavage A.R."/>
            <person name="Bult C.J."/>
            <person name="Tomb J.-F."/>
            <person name="Dougherty B.A."/>
            <person name="Merrick J.M."/>
            <person name="McKenney K."/>
            <person name="Sutton G.G."/>
            <person name="FitzHugh W."/>
            <person name="Fields C.A."/>
            <person name="Gocayne J.D."/>
            <person name="Scott J.D."/>
            <person name="Shirley R."/>
            <person name="Liu L.-I."/>
            <person name="Glodek A."/>
            <person name="Kelley J.M."/>
            <person name="Weidman J.F."/>
            <person name="Phillips C.A."/>
            <person name="Spriggs T."/>
            <person name="Hedblom E."/>
            <person name="Cotton M.D."/>
            <person name="Utterback T.R."/>
            <person name="Hanna M.C."/>
            <person name="Nguyen D.T."/>
            <person name="Saudek D.M."/>
            <person name="Brandon R.C."/>
            <person name="Fine L.D."/>
            <person name="Fritchman J.L."/>
            <person name="Fuhrmann J.L."/>
            <person name="Geoghagen N.S.M."/>
            <person name="Gnehm C.L."/>
            <person name="McDonald L.A."/>
            <person name="Small K.V."/>
            <person name="Fraser C.M."/>
            <person name="Smith H.O."/>
            <person name="Venter J.C."/>
        </authorList>
    </citation>
    <scope>NUCLEOTIDE SEQUENCE [LARGE SCALE GENOMIC DNA]</scope>
    <source>
        <strain>ATCC 51907 / DSM 11121 / KW20 / Rd</strain>
    </source>
</reference>
<gene>
    <name evidence="1" type="primary">priA</name>
    <name type="ordered locus">HI_0339</name>
</gene>
<protein>
    <recommendedName>
        <fullName evidence="1">Replication restart protein PriA</fullName>
    </recommendedName>
    <alternativeName>
        <fullName evidence="1">ATP-dependent DNA helicase PriA</fullName>
        <ecNumber evidence="1">5.6.2.4</ecNumber>
    </alternativeName>
    <alternativeName>
        <fullName evidence="1">DNA 3'-5' helicase PriA</fullName>
    </alternativeName>
</protein>
<accession>P44647</accession>
<organism>
    <name type="scientific">Haemophilus influenzae (strain ATCC 51907 / DSM 11121 / KW20 / Rd)</name>
    <dbReference type="NCBI Taxonomy" id="71421"/>
    <lineage>
        <taxon>Bacteria</taxon>
        <taxon>Pseudomonadati</taxon>
        <taxon>Pseudomonadota</taxon>
        <taxon>Gammaproteobacteria</taxon>
        <taxon>Pasteurellales</taxon>
        <taxon>Pasteurellaceae</taxon>
        <taxon>Haemophilus</taxon>
    </lineage>
</organism>
<feature type="chain" id="PRO_0000102124" description="Replication restart protein PriA">
    <location>
        <begin position="1"/>
        <end position="730"/>
    </location>
</feature>
<feature type="domain" description="Helicase ATP-binding" evidence="1">
    <location>
        <begin position="212"/>
        <end position="378"/>
    </location>
</feature>
<feature type="domain" description="Helicase C-terminal" evidence="1">
    <location>
        <begin position="472"/>
        <end position="640"/>
    </location>
</feature>
<feature type="short sequence motif" description="DEAH box" evidence="1">
    <location>
        <begin position="321"/>
        <end position="324"/>
    </location>
</feature>
<feature type="binding site" evidence="1">
    <location>
        <begin position="225"/>
        <end position="232"/>
    </location>
    <ligand>
        <name>ATP</name>
        <dbReference type="ChEBI" id="CHEBI:30616"/>
    </ligand>
</feature>
<feature type="binding site" evidence="1">
    <location>
        <position position="437"/>
    </location>
    <ligand>
        <name>Zn(2+)</name>
        <dbReference type="ChEBI" id="CHEBI:29105"/>
        <label>1</label>
    </ligand>
</feature>
<feature type="binding site" evidence="1">
    <location>
        <position position="440"/>
    </location>
    <ligand>
        <name>Zn(2+)</name>
        <dbReference type="ChEBI" id="CHEBI:29105"/>
        <label>1</label>
    </ligand>
</feature>
<feature type="binding site" evidence="1">
    <location>
        <position position="446"/>
    </location>
    <ligand>
        <name>Zn(2+)</name>
        <dbReference type="ChEBI" id="CHEBI:29105"/>
        <label>2</label>
    </ligand>
</feature>
<feature type="binding site" evidence="1">
    <location>
        <position position="449"/>
    </location>
    <ligand>
        <name>Zn(2+)</name>
        <dbReference type="ChEBI" id="CHEBI:29105"/>
        <label>2</label>
    </ligand>
</feature>
<feature type="binding site" evidence="1">
    <location>
        <position position="464"/>
    </location>
    <ligand>
        <name>Zn(2+)</name>
        <dbReference type="ChEBI" id="CHEBI:29105"/>
        <label>2</label>
    </ligand>
</feature>
<feature type="binding site" evidence="1">
    <location>
        <position position="467"/>
    </location>
    <ligand>
        <name>Zn(2+)</name>
        <dbReference type="ChEBI" id="CHEBI:29105"/>
        <label>2</label>
    </ligand>
</feature>
<feature type="binding site" evidence="1">
    <location>
        <position position="477"/>
    </location>
    <ligand>
        <name>Zn(2+)</name>
        <dbReference type="ChEBI" id="CHEBI:29105"/>
        <label>1</label>
    </ligand>
</feature>
<feature type="binding site" evidence="1">
    <location>
        <position position="480"/>
    </location>
    <ligand>
        <name>Zn(2+)</name>
        <dbReference type="ChEBI" id="CHEBI:29105"/>
        <label>1</label>
    </ligand>
</feature>
<dbReference type="EC" id="5.6.2.4" evidence="1"/>
<dbReference type="EMBL" id="L42023">
    <property type="protein sequence ID" value="AAC22001.1"/>
    <property type="molecule type" value="Genomic_DNA"/>
</dbReference>
<dbReference type="PIR" id="G64062">
    <property type="entry name" value="G64062"/>
</dbReference>
<dbReference type="RefSeq" id="NP_438503.1">
    <property type="nucleotide sequence ID" value="NC_000907.1"/>
</dbReference>
<dbReference type="SMR" id="P44647"/>
<dbReference type="STRING" id="71421.HI_0339"/>
<dbReference type="EnsemblBacteria" id="AAC22001">
    <property type="protein sequence ID" value="AAC22001"/>
    <property type="gene ID" value="HI_0339"/>
</dbReference>
<dbReference type="KEGG" id="hin:HI_0339"/>
<dbReference type="PATRIC" id="fig|71421.8.peg.356"/>
<dbReference type="eggNOG" id="COG1198">
    <property type="taxonomic scope" value="Bacteria"/>
</dbReference>
<dbReference type="HOGENOM" id="CLU_013353_3_1_6"/>
<dbReference type="OrthoDB" id="9759544at2"/>
<dbReference type="PhylomeDB" id="P44647"/>
<dbReference type="BioCyc" id="HINF71421:G1GJ1-355-MONOMER"/>
<dbReference type="Proteomes" id="UP000000579">
    <property type="component" value="Chromosome"/>
</dbReference>
<dbReference type="GO" id="GO:1990077">
    <property type="term" value="C:primosome complex"/>
    <property type="evidence" value="ECO:0007669"/>
    <property type="project" value="UniProtKB-UniRule"/>
</dbReference>
<dbReference type="GO" id="GO:0043138">
    <property type="term" value="F:3'-5' DNA helicase activity"/>
    <property type="evidence" value="ECO:0000318"/>
    <property type="project" value="GO_Central"/>
</dbReference>
<dbReference type="GO" id="GO:0005524">
    <property type="term" value="F:ATP binding"/>
    <property type="evidence" value="ECO:0007669"/>
    <property type="project" value="UniProtKB-UniRule"/>
</dbReference>
<dbReference type="GO" id="GO:0016887">
    <property type="term" value="F:ATP hydrolysis activity"/>
    <property type="evidence" value="ECO:0007669"/>
    <property type="project" value="RHEA"/>
</dbReference>
<dbReference type="GO" id="GO:0003677">
    <property type="term" value="F:DNA binding"/>
    <property type="evidence" value="ECO:0007669"/>
    <property type="project" value="UniProtKB-UniRule"/>
</dbReference>
<dbReference type="GO" id="GO:0008270">
    <property type="term" value="F:zinc ion binding"/>
    <property type="evidence" value="ECO:0007669"/>
    <property type="project" value="UniProtKB-UniRule"/>
</dbReference>
<dbReference type="GO" id="GO:0006310">
    <property type="term" value="P:DNA recombination"/>
    <property type="evidence" value="ECO:0000318"/>
    <property type="project" value="GO_Central"/>
</dbReference>
<dbReference type="GO" id="GO:0006260">
    <property type="term" value="P:DNA replication"/>
    <property type="evidence" value="ECO:0000318"/>
    <property type="project" value="GO_Central"/>
</dbReference>
<dbReference type="GO" id="GO:0006270">
    <property type="term" value="P:DNA replication initiation"/>
    <property type="evidence" value="ECO:0000318"/>
    <property type="project" value="GO_Central"/>
</dbReference>
<dbReference type="GO" id="GO:0006269">
    <property type="term" value="P:DNA replication, synthesis of primer"/>
    <property type="evidence" value="ECO:0007669"/>
    <property type="project" value="UniProtKB-KW"/>
</dbReference>
<dbReference type="GO" id="GO:0006302">
    <property type="term" value="P:double-strand break repair"/>
    <property type="evidence" value="ECO:0000318"/>
    <property type="project" value="GO_Central"/>
</dbReference>
<dbReference type="CDD" id="cd17929">
    <property type="entry name" value="DEXHc_priA"/>
    <property type="match status" value="1"/>
</dbReference>
<dbReference type="CDD" id="cd18804">
    <property type="entry name" value="SF2_C_priA"/>
    <property type="match status" value="1"/>
</dbReference>
<dbReference type="FunFam" id="3.40.1440.60:FF:000001">
    <property type="entry name" value="Primosomal protein N"/>
    <property type="match status" value="1"/>
</dbReference>
<dbReference type="FunFam" id="3.40.50.300:FF:000489">
    <property type="entry name" value="Primosome assembly protein PriA"/>
    <property type="match status" value="1"/>
</dbReference>
<dbReference type="Gene3D" id="3.40.50.300">
    <property type="entry name" value="P-loop containing nucleotide triphosphate hydrolases"/>
    <property type="match status" value="2"/>
</dbReference>
<dbReference type="Gene3D" id="3.40.1440.60">
    <property type="entry name" value="PriA, 3(prime) DNA-binding domain"/>
    <property type="match status" value="1"/>
</dbReference>
<dbReference type="HAMAP" id="MF_00983">
    <property type="entry name" value="PriA"/>
    <property type="match status" value="1"/>
</dbReference>
<dbReference type="InterPro" id="IPR011545">
    <property type="entry name" value="DEAD/DEAH_box_helicase_dom"/>
</dbReference>
<dbReference type="InterPro" id="IPR014001">
    <property type="entry name" value="Helicase_ATP-bd"/>
</dbReference>
<dbReference type="InterPro" id="IPR001650">
    <property type="entry name" value="Helicase_C-like"/>
</dbReference>
<dbReference type="InterPro" id="IPR027417">
    <property type="entry name" value="P-loop_NTPase"/>
</dbReference>
<dbReference type="InterPro" id="IPR005259">
    <property type="entry name" value="PriA"/>
</dbReference>
<dbReference type="InterPro" id="IPR041222">
    <property type="entry name" value="PriA_3primeBD"/>
</dbReference>
<dbReference type="InterPro" id="IPR042115">
    <property type="entry name" value="PriA_3primeBD_sf"/>
</dbReference>
<dbReference type="InterPro" id="IPR041236">
    <property type="entry name" value="PriA_C"/>
</dbReference>
<dbReference type="InterPro" id="IPR040498">
    <property type="entry name" value="PriA_CRR"/>
</dbReference>
<dbReference type="InterPro" id="IPR050880">
    <property type="entry name" value="PriA_helicase"/>
</dbReference>
<dbReference type="NCBIfam" id="TIGR00595">
    <property type="entry name" value="priA"/>
    <property type="match status" value="1"/>
</dbReference>
<dbReference type="NCBIfam" id="NF004065">
    <property type="entry name" value="PRK05580.1-1"/>
    <property type="match status" value="1"/>
</dbReference>
<dbReference type="NCBIfam" id="NF004067">
    <property type="entry name" value="PRK05580.1-4"/>
    <property type="match status" value="1"/>
</dbReference>
<dbReference type="PANTHER" id="PTHR30580">
    <property type="entry name" value="PRIMOSOMAL PROTEIN N"/>
    <property type="match status" value="1"/>
</dbReference>
<dbReference type="PANTHER" id="PTHR30580:SF0">
    <property type="entry name" value="PRIMOSOMAL PROTEIN N"/>
    <property type="match status" value="1"/>
</dbReference>
<dbReference type="Pfam" id="PF00270">
    <property type="entry name" value="DEAD"/>
    <property type="match status" value="1"/>
</dbReference>
<dbReference type="Pfam" id="PF00271">
    <property type="entry name" value="Helicase_C"/>
    <property type="match status" value="1"/>
</dbReference>
<dbReference type="Pfam" id="PF17764">
    <property type="entry name" value="PriA_3primeBD"/>
    <property type="match status" value="1"/>
</dbReference>
<dbReference type="Pfam" id="PF18074">
    <property type="entry name" value="PriA_C"/>
    <property type="match status" value="1"/>
</dbReference>
<dbReference type="Pfam" id="PF18319">
    <property type="entry name" value="Zn_ribbon_PriA"/>
    <property type="match status" value="1"/>
</dbReference>
<dbReference type="SMART" id="SM00487">
    <property type="entry name" value="DEXDc"/>
    <property type="match status" value="1"/>
</dbReference>
<dbReference type="SMART" id="SM00490">
    <property type="entry name" value="HELICc"/>
    <property type="match status" value="1"/>
</dbReference>
<dbReference type="SUPFAM" id="SSF52540">
    <property type="entry name" value="P-loop containing nucleoside triphosphate hydrolases"/>
    <property type="match status" value="1"/>
</dbReference>
<dbReference type="PROSITE" id="PS51192">
    <property type="entry name" value="HELICASE_ATP_BIND_1"/>
    <property type="match status" value="1"/>
</dbReference>
<dbReference type="PROSITE" id="PS51194">
    <property type="entry name" value="HELICASE_CTER"/>
    <property type="match status" value="1"/>
</dbReference>